<keyword id="KW-0167">Capsid protein</keyword>
<keyword id="KW-1139">Helical capsid protein</keyword>
<keyword id="KW-1048">Host nucleus</keyword>
<keyword id="KW-0945">Host-virus interaction</keyword>
<keyword id="KW-0687">Ribonucleoprotein</keyword>
<keyword id="KW-0694">RNA-binding</keyword>
<keyword id="KW-0543">Viral nucleoprotein</keyword>
<keyword id="KW-1163">Viral penetration into host nucleus</keyword>
<keyword id="KW-0946">Virion</keyword>
<keyword id="KW-1160">Virus entry into host cell</keyword>
<sequence>MASQGTKRSYEQMETGGERQDATEIRASVGRMIGGIGRFYIQMCTELKLSDYEGRLIQNSITIERMVLSAFDERRNKYLEEHPSAGKDPKKTGGPIYRRIDGKWMRELILYDKEEIRRIWRQANNGEDATAGLTHIMIWHSNLNDATYQRTRALVRTGMDPRMCSLMQGSTLPRRSGAAGAAVKGVGTIVMELIRMIKRGINDRNFWRGENGRRTRIAYERMCNILKGKFQTAAQRAMMDQVRESRNPGNAEIEDLIFLARSALILRGSVAHKSCLPACVYGLAVASGHDFEREGYSLVGIDPFKLLQNSQVFSLIRPNENPAHKSQLVWMACHSAAFEDLRVSGFIRGKRVVPRGKLSTRGVQIASNENVEAMDSSTLELRSRYWAIRTRSGGNTNQQKASAGQISVQPTFSVQRNLPFERATVMAAFVGNTEGRTSDMRTEIIRMMESAKPEDLSFQGRGVFELSDEKATNPIVPSFDMNNEGSYFFGDNAEEYDN</sequence>
<evidence type="ECO:0000255" key="1">
    <source>
        <dbReference type="HAMAP-Rule" id="MF_04070"/>
    </source>
</evidence>
<evidence type="ECO:0000256" key="2">
    <source>
        <dbReference type="SAM" id="MobiDB-lite"/>
    </source>
</evidence>
<gene>
    <name evidence="1" type="primary">NP</name>
</gene>
<dbReference type="EMBL" id="M63762">
    <property type="protein sequence ID" value="AAA52261.1"/>
    <property type="molecule type" value="Genomic_RNA"/>
</dbReference>
<dbReference type="SMR" id="P26082"/>
<dbReference type="GO" id="GO:0019029">
    <property type="term" value="C:helical viral capsid"/>
    <property type="evidence" value="ECO:0007669"/>
    <property type="project" value="UniProtKB-UniRule"/>
</dbReference>
<dbReference type="GO" id="GO:0043657">
    <property type="term" value="C:host cell"/>
    <property type="evidence" value="ECO:0007669"/>
    <property type="project" value="GOC"/>
</dbReference>
<dbReference type="GO" id="GO:0042025">
    <property type="term" value="C:host cell nucleus"/>
    <property type="evidence" value="ECO:0007669"/>
    <property type="project" value="UniProtKB-SubCell"/>
</dbReference>
<dbReference type="GO" id="GO:1990904">
    <property type="term" value="C:ribonucleoprotein complex"/>
    <property type="evidence" value="ECO:0007669"/>
    <property type="project" value="UniProtKB-KW"/>
</dbReference>
<dbReference type="GO" id="GO:0019013">
    <property type="term" value="C:viral nucleocapsid"/>
    <property type="evidence" value="ECO:0007669"/>
    <property type="project" value="UniProtKB-UniRule"/>
</dbReference>
<dbReference type="GO" id="GO:0003723">
    <property type="term" value="F:RNA binding"/>
    <property type="evidence" value="ECO:0007669"/>
    <property type="project" value="UniProtKB-UniRule"/>
</dbReference>
<dbReference type="GO" id="GO:0005198">
    <property type="term" value="F:structural molecule activity"/>
    <property type="evidence" value="ECO:0007669"/>
    <property type="project" value="UniProtKB-UniRule"/>
</dbReference>
<dbReference type="GO" id="GO:0046718">
    <property type="term" value="P:symbiont entry into host cell"/>
    <property type="evidence" value="ECO:0007669"/>
    <property type="project" value="UniProtKB-KW"/>
</dbReference>
<dbReference type="GO" id="GO:0075732">
    <property type="term" value="P:viral penetration into host nucleus"/>
    <property type="evidence" value="ECO:0007669"/>
    <property type="project" value="UniProtKB-UniRule"/>
</dbReference>
<dbReference type="HAMAP" id="MF_04070">
    <property type="entry name" value="INFV_NCAP"/>
    <property type="match status" value="1"/>
</dbReference>
<dbReference type="InterPro" id="IPR002141">
    <property type="entry name" value="Flu_NP"/>
</dbReference>
<dbReference type="Pfam" id="PF00506">
    <property type="entry name" value="Flu_NP"/>
    <property type="match status" value="1"/>
</dbReference>
<dbReference type="SUPFAM" id="SSF161003">
    <property type="entry name" value="flu NP-like"/>
    <property type="match status" value="1"/>
</dbReference>
<name>NCAP_I57A7</name>
<protein>
    <recommendedName>
        <fullName evidence="1">Nucleoprotein</fullName>
    </recommendedName>
    <alternativeName>
        <fullName evidence="1">Nucleocapsid protein</fullName>
        <shortName evidence="1">Protein N</shortName>
    </alternativeName>
</protein>
<reference key="1">
    <citation type="journal article" date="1991" name="J. Virol.">
        <title>Evolution of influenza A virus nucleoprotein genes: implications for the origins of H1N1 human and classical swine viruses.</title>
        <authorList>
            <person name="Gorman O.T."/>
            <person name="Bean W.J."/>
            <person name="Kawaoka Y."/>
            <person name="Donatelli I."/>
            <person name="Guo Y."/>
            <person name="Webster R.G."/>
        </authorList>
    </citation>
    <scope>NUCLEOTIDE SEQUENCE [GENOMIC RNA]</scope>
</reference>
<organismHost>
    <name type="scientific">Aves</name>
    <dbReference type="NCBI Taxonomy" id="8782"/>
</organismHost>
<organismHost>
    <name type="scientific">Homo sapiens</name>
    <name type="common">Human</name>
    <dbReference type="NCBI Taxonomy" id="9606"/>
</organismHost>
<organismHost>
    <name type="scientific">Sus scrofa</name>
    <name type="common">Pig</name>
    <dbReference type="NCBI Taxonomy" id="9823"/>
</organismHost>
<organism>
    <name type="scientific">Influenza A virus (strain A/Swine/Wisconsin/1/1957 H1N1)</name>
    <dbReference type="NCBI Taxonomy" id="383534"/>
    <lineage>
        <taxon>Viruses</taxon>
        <taxon>Riboviria</taxon>
        <taxon>Orthornavirae</taxon>
        <taxon>Negarnaviricota</taxon>
        <taxon>Polyploviricotina</taxon>
        <taxon>Insthoviricetes</taxon>
        <taxon>Articulavirales</taxon>
        <taxon>Orthomyxoviridae</taxon>
        <taxon>Alphainfluenzavirus</taxon>
        <taxon>Alphainfluenzavirus influenzae</taxon>
        <taxon>Influenza A virus</taxon>
    </lineage>
</organism>
<proteinExistence type="inferred from homology"/>
<accession>P26082</accession>
<comment type="function">
    <text evidence="1">Encapsidates the negative strand viral RNA, protecting it from nucleases. The encapsidated genomic RNA is termed the ribonucleoprotein (RNP) and serves as template for transcription and replication. The RNP needs to be localized in the host nucleus to start an infectious cycle, but is too large to diffuse through the nuclear pore complex. NP comprises at least 2 nuclear localization signals that are responsible for the active RNP import into the nucleus through cellular importin alpha/beta pathway. Later in the infection, nclear export of RNPs are mediated through viral proteins NEP interacting with M1 which binds nucleoproteins. It is possible that nucleoprotein binds directly host exportin-1/XPO1 and plays an active role in RNPs nuclear export. M1 interaction with RNP seems to hide nucleoprotein's nuclear localization signals. Soon after a virion infects a new cell, M1 dissociates from the RNP under acidification of the virion driven by M2 protein. Dissociation of M1 from RNP unmasks nucleoprotein's nuclear localization signals, targeting the RNP to the nucleus.</text>
</comment>
<comment type="subunit">
    <text evidence="1">Homomultimerizes to form the nucleocapsid. May bind host exportin-1/XPO1. Binds to viral genomic RNA. Protein-RNA contacts are mediated by a combination of electrostatic interactions between positively charged residues and the phosphate backbone and planar interactions between aromatic side chains and bases.</text>
</comment>
<comment type="subcellular location">
    <subcellularLocation>
        <location evidence="1">Virion</location>
    </subcellularLocation>
    <subcellularLocation>
        <location evidence="1">Host nucleus</location>
    </subcellularLocation>
</comment>
<comment type="PTM">
    <text evidence="1">Late in virus-infected cells, may be cleaved from a 56-kDa protein to a 53-kDa protein by a cellular caspase. This cleavage might be a marker for the onset of apoptosis in infected cells or have a specific function in virus host interaction.</text>
</comment>
<comment type="similarity">
    <text evidence="1">Belongs to the influenza viruses nucleoprotein family.</text>
</comment>
<feature type="chain" id="PRO_0000079137" description="Nucleoprotein">
    <location>
        <begin position="1"/>
        <end position="498"/>
    </location>
</feature>
<feature type="region of interest" description="Disordered" evidence="2">
    <location>
        <begin position="1"/>
        <end position="22"/>
    </location>
</feature>
<feature type="short sequence motif" description="Unconventional nuclear localization signal" evidence="1">
    <location>
        <begin position="1"/>
        <end position="18"/>
    </location>
</feature>
<feature type="short sequence motif" description="Bipartite nuclear localization signal" evidence="1">
    <location>
        <begin position="198"/>
        <end position="216"/>
    </location>
</feature>
<feature type="compositionally biased region" description="Basic and acidic residues" evidence="2">
    <location>
        <begin position="8"/>
        <end position="22"/>
    </location>
</feature>